<dbReference type="EC" id="4.1.1.50" evidence="1"/>
<dbReference type="EMBL" id="CP000822">
    <property type="protein sequence ID" value="ABV14332.1"/>
    <property type="molecule type" value="Genomic_DNA"/>
</dbReference>
<dbReference type="RefSeq" id="WP_012134037.1">
    <property type="nucleotide sequence ID" value="NC_009792.1"/>
</dbReference>
<dbReference type="SMR" id="A8ALG9"/>
<dbReference type="STRING" id="290338.CKO_03248"/>
<dbReference type="GeneID" id="45137027"/>
<dbReference type="KEGG" id="cko:CKO_03248"/>
<dbReference type="HOGENOM" id="CLU_092007_0_0_6"/>
<dbReference type="OrthoDB" id="5290709at2"/>
<dbReference type="UniPathway" id="UPA00331">
    <property type="reaction ID" value="UER00451"/>
</dbReference>
<dbReference type="Proteomes" id="UP000008148">
    <property type="component" value="Chromosome"/>
</dbReference>
<dbReference type="GO" id="GO:0005829">
    <property type="term" value="C:cytosol"/>
    <property type="evidence" value="ECO:0007669"/>
    <property type="project" value="TreeGrafter"/>
</dbReference>
<dbReference type="GO" id="GO:0004014">
    <property type="term" value="F:adenosylmethionine decarboxylase activity"/>
    <property type="evidence" value="ECO:0007669"/>
    <property type="project" value="UniProtKB-UniRule"/>
</dbReference>
<dbReference type="GO" id="GO:0008295">
    <property type="term" value="P:spermidine biosynthetic process"/>
    <property type="evidence" value="ECO:0007669"/>
    <property type="project" value="UniProtKB-UniRule"/>
</dbReference>
<dbReference type="FunFam" id="3.60.90.10:FF:000001">
    <property type="entry name" value="S-adenosylmethionine decarboxylase proenzyme"/>
    <property type="match status" value="1"/>
</dbReference>
<dbReference type="Gene3D" id="3.60.90.10">
    <property type="entry name" value="S-adenosylmethionine decarboxylase"/>
    <property type="match status" value="1"/>
</dbReference>
<dbReference type="HAMAP" id="MF_00465">
    <property type="entry name" value="AdoMetDC_2"/>
    <property type="match status" value="1"/>
</dbReference>
<dbReference type="InterPro" id="IPR003826">
    <property type="entry name" value="AdoMetDC_fam_prok"/>
</dbReference>
<dbReference type="InterPro" id="IPR009165">
    <property type="entry name" value="S-AdoMet_deCO2ase_bac"/>
</dbReference>
<dbReference type="InterPro" id="IPR016067">
    <property type="entry name" value="S-AdoMet_deCO2ase_core"/>
</dbReference>
<dbReference type="NCBIfam" id="TIGR03331">
    <property type="entry name" value="SAM_DCase_Eco"/>
    <property type="match status" value="1"/>
</dbReference>
<dbReference type="PANTHER" id="PTHR33866">
    <property type="entry name" value="S-ADENOSYLMETHIONINE DECARBOXYLASE PROENZYME"/>
    <property type="match status" value="1"/>
</dbReference>
<dbReference type="PANTHER" id="PTHR33866:SF1">
    <property type="entry name" value="S-ADENOSYLMETHIONINE DECARBOXYLASE PROENZYME"/>
    <property type="match status" value="1"/>
</dbReference>
<dbReference type="Pfam" id="PF02675">
    <property type="entry name" value="AdoMet_dc"/>
    <property type="match status" value="1"/>
</dbReference>
<dbReference type="PIRSF" id="PIRSF001356">
    <property type="entry name" value="SAM_decarboxylas"/>
    <property type="match status" value="1"/>
</dbReference>
<dbReference type="SUPFAM" id="SSF56276">
    <property type="entry name" value="S-adenosylmethionine decarboxylase"/>
    <property type="match status" value="1"/>
</dbReference>
<name>SPED_CITK8</name>
<organism>
    <name type="scientific">Citrobacter koseri (strain ATCC BAA-895 / CDC 4225-83 / SGSC4696)</name>
    <dbReference type="NCBI Taxonomy" id="290338"/>
    <lineage>
        <taxon>Bacteria</taxon>
        <taxon>Pseudomonadati</taxon>
        <taxon>Pseudomonadota</taxon>
        <taxon>Gammaproteobacteria</taxon>
        <taxon>Enterobacterales</taxon>
        <taxon>Enterobacteriaceae</taxon>
        <taxon>Citrobacter</taxon>
    </lineage>
</organism>
<keyword id="KW-0068">Autocatalytic cleavage</keyword>
<keyword id="KW-0210">Decarboxylase</keyword>
<keyword id="KW-0456">Lyase</keyword>
<keyword id="KW-0620">Polyamine biosynthesis</keyword>
<keyword id="KW-0670">Pyruvate</keyword>
<keyword id="KW-1185">Reference proteome</keyword>
<keyword id="KW-0949">S-adenosyl-L-methionine</keyword>
<keyword id="KW-0704">Schiff base</keyword>
<keyword id="KW-0745">Spermidine biosynthesis</keyword>
<keyword id="KW-0865">Zymogen</keyword>
<reference key="1">
    <citation type="submission" date="2007-08" db="EMBL/GenBank/DDBJ databases">
        <authorList>
            <consortium name="The Citrobacter koseri Genome Sequencing Project"/>
            <person name="McClelland M."/>
            <person name="Sanderson E.K."/>
            <person name="Porwollik S."/>
            <person name="Spieth J."/>
            <person name="Clifton W.S."/>
            <person name="Latreille P."/>
            <person name="Courtney L."/>
            <person name="Wang C."/>
            <person name="Pepin K."/>
            <person name="Bhonagiri V."/>
            <person name="Nash W."/>
            <person name="Johnson M."/>
            <person name="Thiruvilangam P."/>
            <person name="Wilson R."/>
        </authorList>
    </citation>
    <scope>NUCLEOTIDE SEQUENCE [LARGE SCALE GENOMIC DNA]</scope>
    <source>
        <strain>ATCC BAA-895 / CDC 4225-83 / SGSC4696</strain>
    </source>
</reference>
<evidence type="ECO:0000255" key="1">
    <source>
        <dbReference type="HAMAP-Rule" id="MF_00465"/>
    </source>
</evidence>
<sequence>MKKLKLHGFNNLTKSLSFCIYDICYAKTAEERDGYIAYIDELYNANRLTEILSETCSIIGANILNIARQDYEPQGASVTILVSEEPVDPQLIDKTEHPGPLPEAVVAHLDKSHICVHTYPESHPEGGLCTFRADIEVSTCGVISPLKALNYLIHQLESDIVTIDYRVRGFTRDVNGMKHFIDHEINSIQNFMSDDMKSLYDMVDVNVYQENIFHTKMLLKEFDLKHYMFHTKPEDLTETERKEITAALWKEMREIYYGRNIPAV</sequence>
<comment type="function">
    <text evidence="1">Catalyzes the decarboxylation of S-adenosylmethionine to S-adenosylmethioninamine (dcAdoMet), the propylamine donor required for the synthesis of the polyamines spermine and spermidine from the diamine putrescine.</text>
</comment>
<comment type="catalytic activity">
    <reaction evidence="1">
        <text>S-adenosyl-L-methionine + H(+) = S-adenosyl 3-(methylsulfanyl)propylamine + CO2</text>
        <dbReference type="Rhea" id="RHEA:15981"/>
        <dbReference type="ChEBI" id="CHEBI:15378"/>
        <dbReference type="ChEBI" id="CHEBI:16526"/>
        <dbReference type="ChEBI" id="CHEBI:57443"/>
        <dbReference type="ChEBI" id="CHEBI:59789"/>
        <dbReference type="EC" id="4.1.1.50"/>
    </reaction>
</comment>
<comment type="cofactor">
    <cofactor evidence="1">
        <name>pyruvate</name>
        <dbReference type="ChEBI" id="CHEBI:15361"/>
    </cofactor>
    <text evidence="1">Binds 1 pyruvoyl group covalently per subunit.</text>
</comment>
<comment type="pathway">
    <text evidence="1">Amine and polyamine biosynthesis; S-adenosylmethioninamine biosynthesis; S-adenosylmethioninamine from S-adenosyl-L-methionine: step 1/1.</text>
</comment>
<comment type="subunit">
    <text evidence="1">Heterooctamer of four alpha and four beta chains arranged as a tetramer of alpha/beta heterodimers.</text>
</comment>
<comment type="PTM">
    <text evidence="1">Is synthesized initially as an inactive proenzyme. Formation of the active enzyme involves a self-maturation process in which the active site pyruvoyl group is generated from an internal serine residue via an autocatalytic post-translational modification. Two non-identical subunits are generated from the proenzyme in this reaction, and the pyruvate is formed at the N-terminus of the alpha chain, which is derived from the carboxyl end of the proenzyme. The post-translation cleavage follows an unusual pathway, termed non-hydrolytic serinolysis, in which the side chain hydroxyl group of the serine supplies its oxygen atom to form the C-terminus of the beta chain, while the remainder of the serine residue undergoes an oxidative deamination to produce ammonia and the pyruvoyl group blocking the N-terminus of the alpha chain.</text>
</comment>
<comment type="similarity">
    <text evidence="1">Belongs to the prokaryotic AdoMetDC family. Type 2 subfamily.</text>
</comment>
<proteinExistence type="inferred from homology"/>
<gene>
    <name evidence="1" type="primary">speD</name>
    <name type="ordered locus">CKO_03248</name>
</gene>
<feature type="chain" id="PRO_1000013688" description="S-adenosylmethionine decarboxylase beta chain" evidence="1">
    <location>
        <begin position="1"/>
        <end position="111"/>
    </location>
</feature>
<feature type="chain" id="PRO_0000315014" description="S-adenosylmethionine decarboxylase alpha chain" evidence="1">
    <location>
        <begin position="112"/>
        <end position="264"/>
    </location>
</feature>
<feature type="active site" description="Schiff-base intermediate with substrate; via pyruvic acid" evidence="1">
    <location>
        <position position="112"/>
    </location>
</feature>
<feature type="active site" description="Proton acceptor; for processing activity" evidence="1">
    <location>
        <position position="117"/>
    </location>
</feature>
<feature type="active site" description="Proton donor; for catalytic activity" evidence="1">
    <location>
        <position position="140"/>
    </location>
</feature>
<feature type="site" description="Cleavage (non-hydrolytic); by autolysis" evidence="1">
    <location>
        <begin position="111"/>
        <end position="112"/>
    </location>
</feature>
<feature type="modified residue" description="Pyruvic acid (Ser); by autocatalysis" evidence="1">
    <location>
        <position position="112"/>
    </location>
</feature>
<protein>
    <recommendedName>
        <fullName evidence="1">S-adenosylmethionine decarboxylase proenzyme</fullName>
        <shortName evidence="1">AdoMetDC</shortName>
        <shortName evidence="1">SAMDC</shortName>
        <ecNumber evidence="1">4.1.1.50</ecNumber>
    </recommendedName>
    <component>
        <recommendedName>
            <fullName evidence="1">S-adenosylmethionine decarboxylase beta chain</fullName>
        </recommendedName>
    </component>
    <component>
        <recommendedName>
            <fullName evidence="1">S-adenosylmethionine decarboxylase alpha chain</fullName>
        </recommendedName>
    </component>
</protein>
<accession>A8ALG9</accession>